<proteinExistence type="inferred from homology"/>
<gene>
    <name evidence="1" type="primary">rlmC</name>
    <name type="synonym">rumB</name>
    <name type="ordered locus">PM0070</name>
</gene>
<organism>
    <name type="scientific">Pasteurella multocida (strain Pm70)</name>
    <dbReference type="NCBI Taxonomy" id="272843"/>
    <lineage>
        <taxon>Bacteria</taxon>
        <taxon>Pseudomonadati</taxon>
        <taxon>Pseudomonadota</taxon>
        <taxon>Gammaproteobacteria</taxon>
        <taxon>Pasteurellales</taxon>
        <taxon>Pasteurellaceae</taxon>
        <taxon>Pasteurella</taxon>
    </lineage>
</organism>
<sequence>MPCQHYQRGDCRSCQWLATPYSTQLAKKQQHLQQQLQKLDCTQIQWQAPYTSILQGFRNKAKMAVSGMVERPILSHPQSEADLTDCPLYPAHFTNIFTILRDFIARAGLVPYNIQKQKGELKYILLTESQLDGGLMLRFVLRSEKKLPLVQRELPGLLAKLPQLKVVSLNIQPQHAAILEGEKEIFLTEQHTLEECFNQIPLFIRPQGFFQTNPQVAQGLYGTAQHWVQELPVHRLWDLFCGVGGFGLHCAQALQTQYPDRIIQLTGIEISASAIEAATLSAQKLGLKQVKFQSLDAKHFALAQSPAAQDDTPELVIVNPPRRGIGIELAQFLNQLAPHFILYSSCNAETMGKDVLHLSDYQLKKVQLFDMFPHTSHYEVLCLLERK</sequence>
<keyword id="KW-0004">4Fe-4S</keyword>
<keyword id="KW-0408">Iron</keyword>
<keyword id="KW-0411">Iron-sulfur</keyword>
<keyword id="KW-0479">Metal-binding</keyword>
<keyword id="KW-0489">Methyltransferase</keyword>
<keyword id="KW-1185">Reference proteome</keyword>
<keyword id="KW-0698">rRNA processing</keyword>
<keyword id="KW-0949">S-adenosyl-L-methionine</keyword>
<keyword id="KW-0808">Transferase</keyword>
<feature type="chain" id="PRO_0000161932" description="23S rRNA (uracil(747)-C(5))-methyltransferase RlmC">
    <location>
        <begin position="1"/>
        <end position="387"/>
    </location>
</feature>
<feature type="active site" description="Nucleophile" evidence="1">
    <location>
        <position position="346"/>
    </location>
</feature>
<feature type="binding site" evidence="1">
    <location>
        <position position="3"/>
    </location>
    <ligand>
        <name>[4Fe-4S] cluster</name>
        <dbReference type="ChEBI" id="CHEBI:49883"/>
    </ligand>
</feature>
<feature type="binding site" evidence="1">
    <location>
        <position position="11"/>
    </location>
    <ligand>
        <name>[4Fe-4S] cluster</name>
        <dbReference type="ChEBI" id="CHEBI:49883"/>
    </ligand>
</feature>
<feature type="binding site" evidence="1">
    <location>
        <position position="14"/>
    </location>
    <ligand>
        <name>[4Fe-4S] cluster</name>
        <dbReference type="ChEBI" id="CHEBI:49883"/>
    </ligand>
</feature>
<feature type="binding site" evidence="1">
    <location>
        <position position="86"/>
    </location>
    <ligand>
        <name>[4Fe-4S] cluster</name>
        <dbReference type="ChEBI" id="CHEBI:49883"/>
    </ligand>
</feature>
<feature type="binding site" evidence="1">
    <location>
        <position position="211"/>
    </location>
    <ligand>
        <name>S-adenosyl-L-methionine</name>
        <dbReference type="ChEBI" id="CHEBI:59789"/>
    </ligand>
</feature>
<feature type="binding site" evidence="1">
    <location>
        <position position="240"/>
    </location>
    <ligand>
        <name>S-adenosyl-L-methionine</name>
        <dbReference type="ChEBI" id="CHEBI:59789"/>
    </ligand>
</feature>
<feature type="binding site" evidence="1">
    <location>
        <position position="269"/>
    </location>
    <ligand>
        <name>S-adenosyl-L-methionine</name>
        <dbReference type="ChEBI" id="CHEBI:59789"/>
    </ligand>
</feature>
<feature type="binding site" evidence="1">
    <location>
        <position position="319"/>
    </location>
    <ligand>
        <name>S-adenosyl-L-methionine</name>
        <dbReference type="ChEBI" id="CHEBI:59789"/>
    </ligand>
</feature>
<comment type="function">
    <text evidence="1">Catalyzes the formation of 5-methyl-uridine at position 747 (m5U747) in 23S rRNA.</text>
</comment>
<comment type="catalytic activity">
    <reaction evidence="1">
        <text>uridine(747) in 23S rRNA + S-adenosyl-L-methionine = 5-methyluridine(747) in 23S rRNA + S-adenosyl-L-homocysteine + H(+)</text>
        <dbReference type="Rhea" id="RHEA:42628"/>
        <dbReference type="Rhea" id="RHEA-COMP:10154"/>
        <dbReference type="Rhea" id="RHEA-COMP:10155"/>
        <dbReference type="ChEBI" id="CHEBI:15378"/>
        <dbReference type="ChEBI" id="CHEBI:57856"/>
        <dbReference type="ChEBI" id="CHEBI:59789"/>
        <dbReference type="ChEBI" id="CHEBI:65315"/>
        <dbReference type="ChEBI" id="CHEBI:74447"/>
        <dbReference type="EC" id="2.1.1.189"/>
    </reaction>
</comment>
<comment type="similarity">
    <text evidence="1">Belongs to the class I-like SAM-binding methyltransferase superfamily. RNA M5U methyltransferase family. RlmC subfamily.</text>
</comment>
<comment type="sequence caution" evidence="2">
    <conflict type="erroneous initiation">
        <sequence resource="EMBL-CDS" id="AAK02154"/>
    </conflict>
</comment>
<evidence type="ECO:0000255" key="1">
    <source>
        <dbReference type="HAMAP-Rule" id="MF_01012"/>
    </source>
</evidence>
<evidence type="ECO:0000305" key="2"/>
<dbReference type="EC" id="2.1.1.189" evidence="1"/>
<dbReference type="EMBL" id="AE004439">
    <property type="protein sequence ID" value="AAK02154.1"/>
    <property type="status" value="ALT_INIT"/>
    <property type="molecule type" value="Genomic_DNA"/>
</dbReference>
<dbReference type="SMR" id="Q9CPH1"/>
<dbReference type="STRING" id="272843.PM0070"/>
<dbReference type="EnsemblBacteria" id="AAK02154">
    <property type="protein sequence ID" value="AAK02154"/>
    <property type="gene ID" value="PM0070"/>
</dbReference>
<dbReference type="KEGG" id="pmu:PM0070"/>
<dbReference type="HOGENOM" id="CLU_014689_0_0_6"/>
<dbReference type="Proteomes" id="UP000000809">
    <property type="component" value="Chromosome"/>
</dbReference>
<dbReference type="GO" id="GO:0051539">
    <property type="term" value="F:4 iron, 4 sulfur cluster binding"/>
    <property type="evidence" value="ECO:0007669"/>
    <property type="project" value="UniProtKB-KW"/>
</dbReference>
<dbReference type="GO" id="GO:0005506">
    <property type="term" value="F:iron ion binding"/>
    <property type="evidence" value="ECO:0007669"/>
    <property type="project" value="UniProtKB-UniRule"/>
</dbReference>
<dbReference type="GO" id="GO:0070041">
    <property type="term" value="F:rRNA (uridine-C5-)-methyltransferase activity"/>
    <property type="evidence" value="ECO:0007669"/>
    <property type="project" value="UniProtKB-UniRule"/>
</dbReference>
<dbReference type="GO" id="GO:0070475">
    <property type="term" value="P:rRNA base methylation"/>
    <property type="evidence" value="ECO:0007669"/>
    <property type="project" value="TreeGrafter"/>
</dbReference>
<dbReference type="CDD" id="cd02440">
    <property type="entry name" value="AdoMet_MTases"/>
    <property type="match status" value="1"/>
</dbReference>
<dbReference type="Gene3D" id="2.40.50.1070">
    <property type="match status" value="1"/>
</dbReference>
<dbReference type="Gene3D" id="3.40.50.150">
    <property type="entry name" value="Vaccinia Virus protein VP39"/>
    <property type="match status" value="1"/>
</dbReference>
<dbReference type="HAMAP" id="MF_01012">
    <property type="entry name" value="23SrRNA_methyltr_RlmC"/>
    <property type="match status" value="1"/>
</dbReference>
<dbReference type="InterPro" id="IPR011825">
    <property type="entry name" value="23SrRNA_MeTrfase_RlmC"/>
</dbReference>
<dbReference type="InterPro" id="IPR030390">
    <property type="entry name" value="MeTrfase_TrmA_AS"/>
</dbReference>
<dbReference type="InterPro" id="IPR030391">
    <property type="entry name" value="MeTrfase_TrmA_CS"/>
</dbReference>
<dbReference type="InterPro" id="IPR029063">
    <property type="entry name" value="SAM-dependent_MTases_sf"/>
</dbReference>
<dbReference type="InterPro" id="IPR010280">
    <property type="entry name" value="U5_MeTrfase_fam"/>
</dbReference>
<dbReference type="NCBIfam" id="TIGR02085">
    <property type="entry name" value="meth_trns_rumB"/>
    <property type="match status" value="1"/>
</dbReference>
<dbReference type="PANTHER" id="PTHR11061">
    <property type="entry name" value="RNA M5U METHYLTRANSFERASE"/>
    <property type="match status" value="1"/>
</dbReference>
<dbReference type="PANTHER" id="PTHR11061:SF30">
    <property type="entry name" value="TRNA (URACIL(54)-C(5))-METHYLTRANSFERASE"/>
    <property type="match status" value="1"/>
</dbReference>
<dbReference type="Pfam" id="PF05958">
    <property type="entry name" value="tRNA_U5-meth_tr"/>
    <property type="match status" value="1"/>
</dbReference>
<dbReference type="SUPFAM" id="SSF53335">
    <property type="entry name" value="S-adenosyl-L-methionine-dependent methyltransferases"/>
    <property type="match status" value="1"/>
</dbReference>
<dbReference type="PROSITE" id="PS51687">
    <property type="entry name" value="SAM_MT_RNA_M5U"/>
    <property type="match status" value="1"/>
</dbReference>
<dbReference type="PROSITE" id="PS01230">
    <property type="entry name" value="TRMA_1"/>
    <property type="match status" value="1"/>
</dbReference>
<dbReference type="PROSITE" id="PS01231">
    <property type="entry name" value="TRMA_2"/>
    <property type="match status" value="1"/>
</dbReference>
<accession>Q9CPH1</accession>
<name>RLMC_PASMU</name>
<protein>
    <recommendedName>
        <fullName evidence="1">23S rRNA (uracil(747)-C(5))-methyltransferase RlmC</fullName>
        <ecNumber evidence="1">2.1.1.189</ecNumber>
    </recommendedName>
    <alternativeName>
        <fullName evidence="1">23S rRNA(m5U747)-methyltransferase</fullName>
    </alternativeName>
</protein>
<reference key="1">
    <citation type="journal article" date="2001" name="Proc. Natl. Acad. Sci. U.S.A.">
        <title>Complete genomic sequence of Pasteurella multocida Pm70.</title>
        <authorList>
            <person name="May B.J."/>
            <person name="Zhang Q."/>
            <person name="Li L.L."/>
            <person name="Paustian M.L."/>
            <person name="Whittam T.S."/>
            <person name="Kapur V."/>
        </authorList>
    </citation>
    <scope>NUCLEOTIDE SEQUENCE [LARGE SCALE GENOMIC DNA]</scope>
    <source>
        <strain>Pm70</strain>
    </source>
</reference>